<proteinExistence type="inferred from homology"/>
<name>PYRR_STRGC</name>
<reference key="1">
    <citation type="journal article" date="2007" name="J. Bacteriol.">
        <title>Genome-wide transcriptional changes in Streptococcus gordonii in response to competence signaling peptide.</title>
        <authorList>
            <person name="Vickerman M.M."/>
            <person name="Iobst S."/>
            <person name="Jesionowski A.M."/>
            <person name="Gill S.R."/>
        </authorList>
    </citation>
    <scope>NUCLEOTIDE SEQUENCE [LARGE SCALE GENOMIC DNA]</scope>
    <source>
        <strain>Challis / ATCC 35105 / BCRC 15272 / CH1 / DL1 / V288</strain>
    </source>
</reference>
<gene>
    <name evidence="1" type="primary">pyrR</name>
    <name type="ordered locus">SGO_1107</name>
</gene>
<sequence length="173" mass="19701">MKTKEVVDDITMNRAITRITYEIIERNKELNQVVLAGIKTRGVHLAHRIQKRLAQLEQIDIPVAEIDTKPFRDDKKSQEADSTLIPVDITDRQVILIDDVLYTGRTIRAAIDNLVSHGRPSRVSLAVLVDRGHRELPIRTDYIGKNIPTSRTEEIIVEMTETDGQDRILIKGE</sequence>
<dbReference type="EC" id="2.4.2.9" evidence="1"/>
<dbReference type="EMBL" id="CP000725">
    <property type="protein sequence ID" value="ABV10431.1"/>
    <property type="molecule type" value="Genomic_DNA"/>
</dbReference>
<dbReference type="RefSeq" id="WP_012000518.1">
    <property type="nucleotide sequence ID" value="NC_009785.1"/>
</dbReference>
<dbReference type="SMR" id="A8AX86"/>
<dbReference type="STRING" id="467705.SGO_1107"/>
<dbReference type="KEGG" id="sgo:SGO_1107"/>
<dbReference type="eggNOG" id="COG2065">
    <property type="taxonomic scope" value="Bacteria"/>
</dbReference>
<dbReference type="HOGENOM" id="CLU_094234_2_1_9"/>
<dbReference type="Proteomes" id="UP000001131">
    <property type="component" value="Chromosome"/>
</dbReference>
<dbReference type="GO" id="GO:0003723">
    <property type="term" value="F:RNA binding"/>
    <property type="evidence" value="ECO:0007669"/>
    <property type="project" value="UniProtKB-UniRule"/>
</dbReference>
<dbReference type="GO" id="GO:0004845">
    <property type="term" value="F:uracil phosphoribosyltransferase activity"/>
    <property type="evidence" value="ECO:0007669"/>
    <property type="project" value="UniProtKB-UniRule"/>
</dbReference>
<dbReference type="GO" id="GO:0006353">
    <property type="term" value="P:DNA-templated transcription termination"/>
    <property type="evidence" value="ECO:0007669"/>
    <property type="project" value="UniProtKB-UniRule"/>
</dbReference>
<dbReference type="CDD" id="cd06223">
    <property type="entry name" value="PRTases_typeI"/>
    <property type="match status" value="1"/>
</dbReference>
<dbReference type="FunFam" id="3.40.50.2020:FF:000020">
    <property type="entry name" value="Bifunctional protein PyrR"/>
    <property type="match status" value="1"/>
</dbReference>
<dbReference type="Gene3D" id="3.40.50.2020">
    <property type="match status" value="1"/>
</dbReference>
<dbReference type="HAMAP" id="MF_01219">
    <property type="entry name" value="PyrR"/>
    <property type="match status" value="1"/>
</dbReference>
<dbReference type="InterPro" id="IPR000836">
    <property type="entry name" value="PRibTrfase_dom"/>
</dbReference>
<dbReference type="InterPro" id="IPR029057">
    <property type="entry name" value="PRTase-like"/>
</dbReference>
<dbReference type="InterPro" id="IPR023050">
    <property type="entry name" value="PyrR"/>
</dbReference>
<dbReference type="InterPro" id="IPR050137">
    <property type="entry name" value="PyrR_bifunctional"/>
</dbReference>
<dbReference type="NCBIfam" id="NF003548">
    <property type="entry name" value="PRK05205.1-4"/>
    <property type="match status" value="1"/>
</dbReference>
<dbReference type="NCBIfam" id="NF003549">
    <property type="entry name" value="PRK05205.1-5"/>
    <property type="match status" value="1"/>
</dbReference>
<dbReference type="PANTHER" id="PTHR11608">
    <property type="entry name" value="BIFUNCTIONAL PROTEIN PYRR"/>
    <property type="match status" value="1"/>
</dbReference>
<dbReference type="PANTHER" id="PTHR11608:SF0">
    <property type="entry name" value="BIFUNCTIONAL PROTEIN PYRR"/>
    <property type="match status" value="1"/>
</dbReference>
<dbReference type="Pfam" id="PF00156">
    <property type="entry name" value="Pribosyltran"/>
    <property type="match status" value="1"/>
</dbReference>
<dbReference type="SUPFAM" id="SSF53271">
    <property type="entry name" value="PRTase-like"/>
    <property type="match status" value="1"/>
</dbReference>
<evidence type="ECO:0000255" key="1">
    <source>
        <dbReference type="HAMAP-Rule" id="MF_01219"/>
    </source>
</evidence>
<accession>A8AX86</accession>
<feature type="chain" id="PRO_1000085660" description="Bifunctional protein PyrR">
    <location>
        <begin position="1"/>
        <end position="173"/>
    </location>
</feature>
<feature type="short sequence motif" description="PRPP-binding" evidence="1">
    <location>
        <begin position="94"/>
        <end position="106"/>
    </location>
</feature>
<protein>
    <recommendedName>
        <fullName evidence="1">Bifunctional protein PyrR</fullName>
    </recommendedName>
    <domain>
        <recommendedName>
            <fullName evidence="1">Pyrimidine operon regulatory protein</fullName>
        </recommendedName>
    </domain>
    <domain>
        <recommendedName>
            <fullName evidence="1">Uracil phosphoribosyltransferase</fullName>
            <shortName evidence="1">UPRTase</shortName>
            <ecNumber evidence="1">2.4.2.9</ecNumber>
        </recommendedName>
    </domain>
</protein>
<keyword id="KW-0328">Glycosyltransferase</keyword>
<keyword id="KW-1185">Reference proteome</keyword>
<keyword id="KW-0694">RNA-binding</keyword>
<keyword id="KW-0804">Transcription</keyword>
<keyword id="KW-0805">Transcription regulation</keyword>
<keyword id="KW-0806">Transcription termination</keyword>
<keyword id="KW-0808">Transferase</keyword>
<organism>
    <name type="scientific">Streptococcus gordonii (strain Challis / ATCC 35105 / BCRC 15272 / CH1 / DL1 / V288)</name>
    <dbReference type="NCBI Taxonomy" id="467705"/>
    <lineage>
        <taxon>Bacteria</taxon>
        <taxon>Bacillati</taxon>
        <taxon>Bacillota</taxon>
        <taxon>Bacilli</taxon>
        <taxon>Lactobacillales</taxon>
        <taxon>Streptococcaceae</taxon>
        <taxon>Streptococcus</taxon>
    </lineage>
</organism>
<comment type="function">
    <text evidence="1">Regulates transcriptional attenuation of the pyrimidine nucleotide (pyr) operon by binding in a uridine-dependent manner to specific sites on pyr mRNA. This disrupts an antiterminator hairpin in the RNA and favors formation of a downstream transcription terminator, leading to a reduced expression of downstream genes.</text>
</comment>
<comment type="function">
    <text evidence="1">Also displays a weak uracil phosphoribosyltransferase activity which is not physiologically significant.</text>
</comment>
<comment type="catalytic activity">
    <reaction evidence="1">
        <text>UMP + diphosphate = 5-phospho-alpha-D-ribose 1-diphosphate + uracil</text>
        <dbReference type="Rhea" id="RHEA:13017"/>
        <dbReference type="ChEBI" id="CHEBI:17568"/>
        <dbReference type="ChEBI" id="CHEBI:33019"/>
        <dbReference type="ChEBI" id="CHEBI:57865"/>
        <dbReference type="ChEBI" id="CHEBI:58017"/>
        <dbReference type="EC" id="2.4.2.9"/>
    </reaction>
</comment>
<comment type="subunit">
    <text evidence="1">Homodimer and homohexamer; in equilibrium.</text>
</comment>
<comment type="similarity">
    <text evidence="1">Belongs to the purine/pyrimidine phosphoribosyltransferase family. PyrR subfamily.</text>
</comment>